<sequence length="287" mass="31630">MAIKFENVSYVYSPGSPLEAIGLDQLNFSLEEGKFIALVGHTGSGKSTLMQHFNALLKPTSGKIEIAGYTITPETGNKGLKDLRRKVSLAFQFSEAQLFENTVLKDVEYGPRNFGFSEDEAREAALKWLKKVGLKDDLIEHSPFDLSGGQMRRVALAGVLAYEPEIICLDEPAAGLDPMGRLEMMQLFKDYQAAGHTVILVTHNMDDVADYADDVLALEHGRLIKHASPKEVFKDSEWLQKHHLAEPRSARFAAKLEAAGLKLPGQPLTMPELADAIKQSLKGGEHE</sequence>
<feature type="chain" id="PRO_0000287948" description="Energy-coupling factor transporter ATP-binding protein EcfA2">
    <location>
        <begin position="1"/>
        <end position="287"/>
    </location>
</feature>
<feature type="domain" description="ABC transporter" evidence="1">
    <location>
        <begin position="3"/>
        <end position="245"/>
    </location>
</feature>
<feature type="binding site" evidence="1">
    <location>
        <begin position="40"/>
        <end position="47"/>
    </location>
    <ligand>
        <name>ATP</name>
        <dbReference type="ChEBI" id="CHEBI:30616"/>
    </ligand>
</feature>
<feature type="strand" evidence="6">
    <location>
        <begin position="3"/>
        <end position="16"/>
    </location>
</feature>
<feature type="strand" evidence="6">
    <location>
        <begin position="20"/>
        <end position="30"/>
    </location>
</feature>
<feature type="strand" evidence="6">
    <location>
        <begin position="35"/>
        <end position="40"/>
    </location>
</feature>
<feature type="strand" evidence="4">
    <location>
        <begin position="42"/>
        <end position="45"/>
    </location>
</feature>
<feature type="helix" evidence="6">
    <location>
        <begin position="46"/>
        <end position="53"/>
    </location>
</feature>
<feature type="strand" evidence="6">
    <location>
        <begin position="60"/>
        <end position="66"/>
    </location>
</feature>
<feature type="strand" evidence="6">
    <location>
        <begin position="69"/>
        <end position="71"/>
    </location>
</feature>
<feature type="strand" evidence="2">
    <location>
        <begin position="73"/>
        <end position="75"/>
    </location>
</feature>
<feature type="strand" evidence="5">
    <location>
        <begin position="77"/>
        <end position="79"/>
    </location>
</feature>
<feature type="helix" evidence="6">
    <location>
        <begin position="81"/>
        <end position="86"/>
    </location>
</feature>
<feature type="strand" evidence="6">
    <location>
        <begin position="87"/>
        <end position="90"/>
    </location>
</feature>
<feature type="helix" evidence="6">
    <location>
        <begin position="94"/>
        <end position="96"/>
    </location>
</feature>
<feature type="strand" evidence="6">
    <location>
        <begin position="100"/>
        <end position="102"/>
    </location>
</feature>
<feature type="helix" evidence="6">
    <location>
        <begin position="103"/>
        <end position="113"/>
    </location>
</feature>
<feature type="helix" evidence="6">
    <location>
        <begin position="118"/>
        <end position="131"/>
    </location>
</feature>
<feature type="helix" evidence="6">
    <location>
        <begin position="136"/>
        <end position="140"/>
    </location>
</feature>
<feature type="helix" evidence="5">
    <location>
        <begin position="143"/>
        <end position="145"/>
    </location>
</feature>
<feature type="helix" evidence="6">
    <location>
        <begin position="148"/>
        <end position="160"/>
    </location>
</feature>
<feature type="strand" evidence="6">
    <location>
        <begin position="165"/>
        <end position="171"/>
    </location>
</feature>
<feature type="turn" evidence="6">
    <location>
        <begin position="172"/>
        <end position="175"/>
    </location>
</feature>
<feature type="helix" evidence="6">
    <location>
        <begin position="178"/>
        <end position="192"/>
    </location>
</feature>
<feature type="turn" evidence="6">
    <location>
        <begin position="193"/>
        <end position="195"/>
    </location>
</feature>
<feature type="strand" evidence="6">
    <location>
        <begin position="197"/>
        <end position="201"/>
    </location>
</feature>
<feature type="helix" evidence="6">
    <location>
        <begin position="205"/>
        <end position="211"/>
    </location>
</feature>
<feature type="strand" evidence="6">
    <location>
        <begin position="213"/>
        <end position="219"/>
    </location>
</feature>
<feature type="strand" evidence="6">
    <location>
        <begin position="222"/>
        <end position="227"/>
    </location>
</feature>
<feature type="helix" evidence="6">
    <location>
        <begin position="229"/>
        <end position="232"/>
    </location>
</feature>
<feature type="strand" evidence="3">
    <location>
        <begin position="233"/>
        <end position="235"/>
    </location>
</feature>
<feature type="helix" evidence="6">
    <location>
        <begin position="236"/>
        <end position="241"/>
    </location>
</feature>
<feature type="helix" evidence="6">
    <location>
        <begin position="248"/>
        <end position="259"/>
    </location>
</feature>
<feature type="helix" evidence="6">
    <location>
        <begin position="270"/>
        <end position="281"/>
    </location>
</feature>
<gene>
    <name evidence="1" type="primary">ecfA2</name>
    <name type="synonym">cbiO2</name>
    <name type="ordered locus">Ldb0425</name>
</gene>
<dbReference type="EC" id="7.-.-.-" evidence="1"/>
<dbReference type="EMBL" id="CR954253">
    <property type="protein sequence ID" value="CAI97260.1"/>
    <property type="molecule type" value="Genomic_DNA"/>
</dbReference>
<dbReference type="RefSeq" id="WP_003620869.1">
    <property type="nucleotide sequence ID" value="NZ_JQAV01000001.1"/>
</dbReference>
<dbReference type="PDB" id="5D3M">
    <property type="method" value="X-ray"/>
    <property type="resolution" value="3.30 A"/>
    <property type="chains" value="B/F=1-287"/>
</dbReference>
<dbReference type="PDB" id="5JSZ">
    <property type="method" value="X-ray"/>
    <property type="resolution" value="3.00 A"/>
    <property type="chains" value="B/F=1-287"/>
</dbReference>
<dbReference type="PDB" id="6FNP">
    <property type="method" value="X-ray"/>
    <property type="resolution" value="3.40 A"/>
    <property type="chains" value="C/G=1-287"/>
</dbReference>
<dbReference type="PDB" id="6ZG3">
    <property type="method" value="X-ray"/>
    <property type="resolution" value="2.80 A"/>
    <property type="chains" value="B/G=1-287"/>
</dbReference>
<dbReference type="PDB" id="7NNT">
    <property type="method" value="EM"/>
    <property type="resolution" value="3.40 A"/>
    <property type="chains" value="B=1-287"/>
</dbReference>
<dbReference type="PDB" id="7NNU">
    <property type="method" value="EM"/>
    <property type="resolution" value="2.70 A"/>
    <property type="chains" value="B=1-287"/>
</dbReference>
<dbReference type="PDB" id="8BMP">
    <property type="method" value="EM"/>
    <property type="resolution" value="3.20 A"/>
    <property type="chains" value="B=1-287"/>
</dbReference>
<dbReference type="PDB" id="8BMQ">
    <property type="method" value="EM"/>
    <property type="resolution" value="3.60 A"/>
    <property type="chains" value="B=1-287"/>
</dbReference>
<dbReference type="PDB" id="8BMR">
    <property type="method" value="EM"/>
    <property type="resolution" value="3.80 A"/>
    <property type="chains" value="B=1-287"/>
</dbReference>
<dbReference type="PDB" id="8BMS">
    <property type="method" value="EM"/>
    <property type="resolution" value="2.60 A"/>
    <property type="chains" value="B=1-287"/>
</dbReference>
<dbReference type="PDBsum" id="5D3M"/>
<dbReference type="PDBsum" id="5JSZ"/>
<dbReference type="PDBsum" id="6FNP"/>
<dbReference type="PDBsum" id="6ZG3"/>
<dbReference type="PDBsum" id="7NNT"/>
<dbReference type="PDBsum" id="7NNU"/>
<dbReference type="PDBsum" id="8BMP"/>
<dbReference type="PDBsum" id="8BMQ"/>
<dbReference type="PDBsum" id="8BMR"/>
<dbReference type="PDBsum" id="8BMS"/>
<dbReference type="EMDB" id="EMD-12483"/>
<dbReference type="EMDB" id="EMD-12484"/>
<dbReference type="EMDB" id="EMD-16120"/>
<dbReference type="EMDB" id="EMD-16121"/>
<dbReference type="EMDB" id="EMD-16122"/>
<dbReference type="EMDB" id="EMD-16123"/>
<dbReference type="EMDB" id="EMD-16124"/>
<dbReference type="SMR" id="Q1GBI9"/>
<dbReference type="STRING" id="390333.Ldb0425"/>
<dbReference type="KEGG" id="ldb:Ldb0425"/>
<dbReference type="PATRIC" id="fig|390333.13.peg.367"/>
<dbReference type="eggNOG" id="COG1122">
    <property type="taxonomic scope" value="Bacteria"/>
</dbReference>
<dbReference type="HOGENOM" id="CLU_000604_1_22_9"/>
<dbReference type="BioCyc" id="LDEL390333:LDB_RS01810-MONOMER"/>
<dbReference type="EvolutionaryTrace" id="Q1GBI9"/>
<dbReference type="Proteomes" id="UP000001259">
    <property type="component" value="Chromosome"/>
</dbReference>
<dbReference type="GO" id="GO:0043190">
    <property type="term" value="C:ATP-binding cassette (ABC) transporter complex"/>
    <property type="evidence" value="ECO:0007669"/>
    <property type="project" value="TreeGrafter"/>
</dbReference>
<dbReference type="GO" id="GO:0005524">
    <property type="term" value="F:ATP binding"/>
    <property type="evidence" value="ECO:0007669"/>
    <property type="project" value="UniProtKB-KW"/>
</dbReference>
<dbReference type="GO" id="GO:0016887">
    <property type="term" value="F:ATP hydrolysis activity"/>
    <property type="evidence" value="ECO:0007669"/>
    <property type="project" value="InterPro"/>
</dbReference>
<dbReference type="GO" id="GO:0042626">
    <property type="term" value="F:ATPase-coupled transmembrane transporter activity"/>
    <property type="evidence" value="ECO:0007669"/>
    <property type="project" value="TreeGrafter"/>
</dbReference>
<dbReference type="CDD" id="cd03225">
    <property type="entry name" value="ABC_cobalt_CbiO_domain1"/>
    <property type="match status" value="1"/>
</dbReference>
<dbReference type="FunFam" id="3.40.50.300:FF:000224">
    <property type="entry name" value="Energy-coupling factor transporter ATP-binding protein EcfA"/>
    <property type="match status" value="1"/>
</dbReference>
<dbReference type="Gene3D" id="3.40.50.300">
    <property type="entry name" value="P-loop containing nucleotide triphosphate hydrolases"/>
    <property type="match status" value="1"/>
</dbReference>
<dbReference type="InterPro" id="IPR003593">
    <property type="entry name" value="AAA+_ATPase"/>
</dbReference>
<dbReference type="InterPro" id="IPR003439">
    <property type="entry name" value="ABC_transporter-like_ATP-bd"/>
</dbReference>
<dbReference type="InterPro" id="IPR017871">
    <property type="entry name" value="ABC_transporter-like_CS"/>
</dbReference>
<dbReference type="InterPro" id="IPR015856">
    <property type="entry name" value="ABC_transpr_CbiO/EcfA_su"/>
</dbReference>
<dbReference type="InterPro" id="IPR050095">
    <property type="entry name" value="ECF_ABC_transporter_ATP-bd"/>
</dbReference>
<dbReference type="InterPro" id="IPR030946">
    <property type="entry name" value="EcfA2"/>
</dbReference>
<dbReference type="InterPro" id="IPR027417">
    <property type="entry name" value="P-loop_NTPase"/>
</dbReference>
<dbReference type="NCBIfam" id="TIGR04521">
    <property type="entry name" value="ECF_ATPase_2"/>
    <property type="match status" value="1"/>
</dbReference>
<dbReference type="PANTHER" id="PTHR43553:SF27">
    <property type="entry name" value="ENERGY-COUPLING FACTOR TRANSPORTER ATP-BINDING PROTEIN ECFA2"/>
    <property type="match status" value="1"/>
</dbReference>
<dbReference type="PANTHER" id="PTHR43553">
    <property type="entry name" value="HEAVY METAL TRANSPORTER"/>
    <property type="match status" value="1"/>
</dbReference>
<dbReference type="Pfam" id="PF00005">
    <property type="entry name" value="ABC_tran"/>
    <property type="match status" value="1"/>
</dbReference>
<dbReference type="SMART" id="SM00382">
    <property type="entry name" value="AAA"/>
    <property type="match status" value="1"/>
</dbReference>
<dbReference type="SUPFAM" id="SSF52540">
    <property type="entry name" value="P-loop containing nucleoside triphosphate hydrolases"/>
    <property type="match status" value="1"/>
</dbReference>
<dbReference type="PROSITE" id="PS00211">
    <property type="entry name" value="ABC_TRANSPORTER_1"/>
    <property type="match status" value="1"/>
</dbReference>
<dbReference type="PROSITE" id="PS50893">
    <property type="entry name" value="ABC_TRANSPORTER_2"/>
    <property type="match status" value="1"/>
</dbReference>
<dbReference type="PROSITE" id="PS51246">
    <property type="entry name" value="CBIO"/>
    <property type="match status" value="1"/>
</dbReference>
<evidence type="ECO:0000255" key="1">
    <source>
        <dbReference type="HAMAP-Rule" id="MF_01710"/>
    </source>
</evidence>
<evidence type="ECO:0007829" key="2">
    <source>
        <dbReference type="PDB" id="5D3M"/>
    </source>
</evidence>
<evidence type="ECO:0007829" key="3">
    <source>
        <dbReference type="PDB" id="6FNP"/>
    </source>
</evidence>
<evidence type="ECO:0007829" key="4">
    <source>
        <dbReference type="PDB" id="6ZG3"/>
    </source>
</evidence>
<evidence type="ECO:0007829" key="5">
    <source>
        <dbReference type="PDB" id="7NNU"/>
    </source>
</evidence>
<evidence type="ECO:0007829" key="6">
    <source>
        <dbReference type="PDB" id="8BMS"/>
    </source>
</evidence>
<name>ECFA2_LACDA</name>
<protein>
    <recommendedName>
        <fullName evidence="1">Energy-coupling factor transporter ATP-binding protein EcfA2</fullName>
        <shortName evidence="1">ECF transporter A component EcfA2</shortName>
        <ecNumber evidence="1">7.-.-.-</ecNumber>
    </recommendedName>
</protein>
<keyword id="KW-0002">3D-structure</keyword>
<keyword id="KW-0067">ATP-binding</keyword>
<keyword id="KW-1003">Cell membrane</keyword>
<keyword id="KW-0472">Membrane</keyword>
<keyword id="KW-0547">Nucleotide-binding</keyword>
<keyword id="KW-1185">Reference proteome</keyword>
<keyword id="KW-1278">Translocase</keyword>
<keyword id="KW-0813">Transport</keyword>
<reference key="1">
    <citation type="journal article" date="2006" name="Proc. Natl. Acad. Sci. U.S.A.">
        <title>The complete genome sequence of Lactobacillus bulgaricus reveals extensive and ongoing reductive evolution.</title>
        <authorList>
            <person name="van de Guchte M."/>
            <person name="Penaud S."/>
            <person name="Grimaldi C."/>
            <person name="Barbe V."/>
            <person name="Bryson K."/>
            <person name="Nicolas P."/>
            <person name="Robert C."/>
            <person name="Oztas S."/>
            <person name="Mangenot S."/>
            <person name="Couloux A."/>
            <person name="Loux V."/>
            <person name="Dervyn R."/>
            <person name="Bossy R."/>
            <person name="Bolotin A."/>
            <person name="Batto J.-M."/>
            <person name="Walunas T."/>
            <person name="Gibrat J.-F."/>
            <person name="Bessieres P."/>
            <person name="Weissenbach J."/>
            <person name="Ehrlich S.D."/>
            <person name="Maguin E."/>
        </authorList>
    </citation>
    <scope>NUCLEOTIDE SEQUENCE [LARGE SCALE GENOMIC DNA]</scope>
    <source>
        <strain>ATCC 11842 / DSM 20081 / BCRC 10696 / JCM 1002 / NBRC 13953 / NCIMB 11778 / NCTC 12712 / WDCM 00102 / Lb 14</strain>
    </source>
</reference>
<accession>Q1GBI9</accession>
<organism>
    <name type="scientific">Lactobacillus delbrueckii subsp. bulgaricus (strain ATCC 11842 / DSM 20081 / BCRC 10696 / JCM 1002 / NBRC 13953 / NCIMB 11778 / NCTC 12712 / WDCM 00102 / Lb 14)</name>
    <dbReference type="NCBI Taxonomy" id="390333"/>
    <lineage>
        <taxon>Bacteria</taxon>
        <taxon>Bacillati</taxon>
        <taxon>Bacillota</taxon>
        <taxon>Bacilli</taxon>
        <taxon>Lactobacillales</taxon>
        <taxon>Lactobacillaceae</taxon>
        <taxon>Lactobacillus</taxon>
    </lineage>
</organism>
<proteinExistence type="evidence at protein level"/>
<comment type="function">
    <text evidence="1">ATP-binding (A) component of a common energy-coupling factor (ECF) ABC-transporter complex. Unlike classic ABC transporters this ECF transporter provides the energy necessary to transport a number of different substrates.</text>
</comment>
<comment type="subunit">
    <text evidence="1">Forms a stable energy-coupling factor (ECF) transporter complex composed of 2 membrane-embedded substrate-binding proteins (S component), 2 ATP-binding proteins (A component) and 2 transmembrane proteins (T component).</text>
</comment>
<comment type="subcellular location">
    <subcellularLocation>
        <location evidence="1">Cell membrane</location>
        <topology evidence="1">Peripheral membrane protein</topology>
    </subcellularLocation>
</comment>
<comment type="similarity">
    <text evidence="1">Belongs to the ABC transporter superfamily. Energy-coupling factor EcfA family.</text>
</comment>